<accession>A5UC41</accession>
<gene>
    <name evidence="1" type="primary">trpA</name>
    <name type="ordered locus">CGSHiEE_04745</name>
</gene>
<feature type="chain" id="PRO_1000018212" description="Tryptophan synthase alpha chain">
    <location>
        <begin position="1"/>
        <end position="268"/>
    </location>
</feature>
<feature type="active site" description="Proton acceptor" evidence="1">
    <location>
        <position position="49"/>
    </location>
</feature>
<feature type="active site" description="Proton acceptor" evidence="1">
    <location>
        <position position="60"/>
    </location>
</feature>
<organism>
    <name type="scientific">Haemophilus influenzae (strain PittEE)</name>
    <dbReference type="NCBI Taxonomy" id="374930"/>
    <lineage>
        <taxon>Bacteria</taxon>
        <taxon>Pseudomonadati</taxon>
        <taxon>Pseudomonadota</taxon>
        <taxon>Gammaproteobacteria</taxon>
        <taxon>Pasteurellales</taxon>
        <taxon>Pasteurellaceae</taxon>
        <taxon>Haemophilus</taxon>
    </lineage>
</organism>
<protein>
    <recommendedName>
        <fullName evidence="1">Tryptophan synthase alpha chain</fullName>
        <ecNumber evidence="1">4.2.1.20</ecNumber>
    </recommendedName>
</protein>
<dbReference type="EC" id="4.2.1.20" evidence="1"/>
<dbReference type="EMBL" id="CP000671">
    <property type="protein sequence ID" value="ABQ98342.1"/>
    <property type="molecule type" value="Genomic_DNA"/>
</dbReference>
<dbReference type="SMR" id="A5UC41"/>
<dbReference type="KEGG" id="hip:CGSHiEE_04745"/>
<dbReference type="HOGENOM" id="CLU_016734_0_4_6"/>
<dbReference type="UniPathway" id="UPA00035">
    <property type="reaction ID" value="UER00044"/>
</dbReference>
<dbReference type="GO" id="GO:0005829">
    <property type="term" value="C:cytosol"/>
    <property type="evidence" value="ECO:0007669"/>
    <property type="project" value="TreeGrafter"/>
</dbReference>
<dbReference type="GO" id="GO:0004834">
    <property type="term" value="F:tryptophan synthase activity"/>
    <property type="evidence" value="ECO:0007669"/>
    <property type="project" value="UniProtKB-UniRule"/>
</dbReference>
<dbReference type="CDD" id="cd04724">
    <property type="entry name" value="Tryptophan_synthase_alpha"/>
    <property type="match status" value="1"/>
</dbReference>
<dbReference type="FunFam" id="3.20.20.70:FF:000037">
    <property type="entry name" value="Tryptophan synthase alpha chain"/>
    <property type="match status" value="1"/>
</dbReference>
<dbReference type="Gene3D" id="3.20.20.70">
    <property type="entry name" value="Aldolase class I"/>
    <property type="match status" value="1"/>
</dbReference>
<dbReference type="HAMAP" id="MF_00131">
    <property type="entry name" value="Trp_synth_alpha"/>
    <property type="match status" value="1"/>
</dbReference>
<dbReference type="InterPro" id="IPR013785">
    <property type="entry name" value="Aldolase_TIM"/>
</dbReference>
<dbReference type="InterPro" id="IPR011060">
    <property type="entry name" value="RibuloseP-bd_barrel"/>
</dbReference>
<dbReference type="InterPro" id="IPR018204">
    <property type="entry name" value="Trp_synthase_alpha_AS"/>
</dbReference>
<dbReference type="InterPro" id="IPR002028">
    <property type="entry name" value="Trp_synthase_suA"/>
</dbReference>
<dbReference type="NCBIfam" id="TIGR00262">
    <property type="entry name" value="trpA"/>
    <property type="match status" value="1"/>
</dbReference>
<dbReference type="PANTHER" id="PTHR43406:SF1">
    <property type="entry name" value="TRYPTOPHAN SYNTHASE ALPHA CHAIN, CHLOROPLASTIC"/>
    <property type="match status" value="1"/>
</dbReference>
<dbReference type="PANTHER" id="PTHR43406">
    <property type="entry name" value="TRYPTOPHAN SYNTHASE, ALPHA CHAIN"/>
    <property type="match status" value="1"/>
</dbReference>
<dbReference type="Pfam" id="PF00290">
    <property type="entry name" value="Trp_syntA"/>
    <property type="match status" value="1"/>
</dbReference>
<dbReference type="SUPFAM" id="SSF51366">
    <property type="entry name" value="Ribulose-phoshate binding barrel"/>
    <property type="match status" value="1"/>
</dbReference>
<dbReference type="PROSITE" id="PS00167">
    <property type="entry name" value="TRP_SYNTHASE_ALPHA"/>
    <property type="match status" value="1"/>
</dbReference>
<name>TRPA_HAEIE</name>
<reference key="1">
    <citation type="journal article" date="2007" name="Genome Biol.">
        <title>Characterization and modeling of the Haemophilus influenzae core and supragenomes based on the complete genomic sequences of Rd and 12 clinical nontypeable strains.</title>
        <authorList>
            <person name="Hogg J.S."/>
            <person name="Hu F.Z."/>
            <person name="Janto B."/>
            <person name="Boissy R."/>
            <person name="Hayes J."/>
            <person name="Keefe R."/>
            <person name="Post J.C."/>
            <person name="Ehrlich G.D."/>
        </authorList>
    </citation>
    <scope>NUCLEOTIDE SEQUENCE [LARGE SCALE GENOMIC DNA]</scope>
    <source>
        <strain>PittEE</strain>
    </source>
</reference>
<comment type="function">
    <text evidence="1">The alpha subunit is responsible for the aldol cleavage of indoleglycerol phosphate to indole and glyceraldehyde 3-phosphate.</text>
</comment>
<comment type="catalytic activity">
    <reaction evidence="1">
        <text>(1S,2R)-1-C-(indol-3-yl)glycerol 3-phosphate + L-serine = D-glyceraldehyde 3-phosphate + L-tryptophan + H2O</text>
        <dbReference type="Rhea" id="RHEA:10532"/>
        <dbReference type="ChEBI" id="CHEBI:15377"/>
        <dbReference type="ChEBI" id="CHEBI:33384"/>
        <dbReference type="ChEBI" id="CHEBI:57912"/>
        <dbReference type="ChEBI" id="CHEBI:58866"/>
        <dbReference type="ChEBI" id="CHEBI:59776"/>
        <dbReference type="EC" id="4.2.1.20"/>
    </reaction>
</comment>
<comment type="pathway">
    <text evidence="1">Amino-acid biosynthesis; L-tryptophan biosynthesis; L-tryptophan from chorismate: step 5/5.</text>
</comment>
<comment type="subunit">
    <text evidence="1">Tetramer of two alpha and two beta chains.</text>
</comment>
<comment type="similarity">
    <text evidence="1">Belongs to the TrpA family.</text>
</comment>
<sequence>MSRFETQFATLNAKNEGAFVPFVTLCDPTFDRSFEIICTLVDNGADALELGFPFSDPLLDGPVIQAANNRALTAGHSSEDSFKLLEKVRSKYPEIPISLLLCANLIFAKGLDAFYQRCAEVGVDAVLVADIPLLAKEDYVQAAKKHGIQPVFICPPNADEKTIQGVAKNSEGYTYLVSRAGVTSAENQAHAANLDTLVEQLKAHNAPPILQGFGIAQPAQVKEALALGAAGAISGSATVKIIERNLDNHEQCLAELAEFVQTMKAATK</sequence>
<proteinExistence type="inferred from homology"/>
<keyword id="KW-0028">Amino-acid biosynthesis</keyword>
<keyword id="KW-0057">Aromatic amino acid biosynthesis</keyword>
<keyword id="KW-0456">Lyase</keyword>
<keyword id="KW-0822">Tryptophan biosynthesis</keyword>
<evidence type="ECO:0000255" key="1">
    <source>
        <dbReference type="HAMAP-Rule" id="MF_00131"/>
    </source>
</evidence>